<comment type="function">
    <text evidence="1">Catalyzes the reduction of ribonucleotides to deoxyribonucleotides. May function to provide a pool of deoxyribonucleotide precursors for DNA repair during oxygen limitation and/or for immediate growth after restoration of oxygen (By similarity).</text>
</comment>
<comment type="catalytic activity">
    <reaction>
        <text>a 2'-deoxyribonucleoside 5'-diphosphate + [thioredoxin]-disulfide + H2O = a ribonucleoside 5'-diphosphate + [thioredoxin]-dithiol</text>
        <dbReference type="Rhea" id="RHEA:23252"/>
        <dbReference type="Rhea" id="RHEA-COMP:10698"/>
        <dbReference type="Rhea" id="RHEA-COMP:10700"/>
        <dbReference type="ChEBI" id="CHEBI:15377"/>
        <dbReference type="ChEBI" id="CHEBI:29950"/>
        <dbReference type="ChEBI" id="CHEBI:50058"/>
        <dbReference type="ChEBI" id="CHEBI:57930"/>
        <dbReference type="ChEBI" id="CHEBI:73316"/>
        <dbReference type="EC" id="1.17.4.1"/>
    </reaction>
</comment>
<comment type="cofactor">
    <cofactor evidence="1">
        <name>adenosylcob(III)alamin</name>
        <dbReference type="ChEBI" id="CHEBI:18408"/>
    </cofactor>
    <text evidence="1">5'-deoxyadenosylcobalamine (coenzyme B12).</text>
</comment>
<comment type="similarity">
    <text evidence="3">Belongs to the ribonucleoside diphosphate reductase class-2 family.</text>
</comment>
<proteinExistence type="inferred from homology"/>
<name>NRDJ_STRAW</name>
<organism>
    <name type="scientific">Streptomyces avermitilis (strain ATCC 31267 / DSM 46492 / JCM 5070 / NBRC 14893 / NCIMB 12804 / NRRL 8165 / MA-4680)</name>
    <dbReference type="NCBI Taxonomy" id="227882"/>
    <lineage>
        <taxon>Bacteria</taxon>
        <taxon>Bacillati</taxon>
        <taxon>Actinomycetota</taxon>
        <taxon>Actinomycetes</taxon>
        <taxon>Kitasatosporales</taxon>
        <taxon>Streptomycetaceae</taxon>
        <taxon>Streptomyces</taxon>
    </lineage>
</organism>
<sequence length="964" mass="105012">MTETASGPARGSRAKGTKAKGLRIERIHTTPGVHPYDEVEWARRDVVMTNWRDGSVNFEQRGVEFPDFWSVNAVNIVTSKYFRGAVGTPQREVSLRQLIDRIVKTYRKAGEDYKYFASPADAEIFEHELAYALLHQIFSFNSPVWFNVGTPQPQQVSACFILAVDDSMESILDWYKEEGMIFKGGSGAGLNLSRIRSSKELLSSGGNASGPVSFMRGADASAGTIKSGGATRRAAKMVILDVDHPDIEDFIETKVKEEEKIRALRDAGFDMDLGGDDITSVQYQNANNSVRVNDTFMKAVEEGGKFGLTSRMTGEVIEEVDAKSLFRKMAEAAWACADPGIQYDDTINHWHTCPESGRINGSNPCSEYMHLDNTSCNLASLNLMKFLKDDGKGRQSFEVERFAKVVELVITAMDISICFADFPTQKIGENTRAFRQLGIGYANLGALLMATGHAYDSDGGRALAGAITSLMTGTSYKRSAELAAVVGPYDGYARNAQPHQRVMKQHSDANGVAVRVDDLDTPIWAAATEAWQDVLHLGEKNGFRNAQASVIAPTGTIGLAMSCDTTGLEPDLALVKFKKLVGGGSMQIVNGTVPQALRRLGYQEEQIEAIVAHIAENGNVIDAPGLKHEHYEVFDCAMGERSISAMGHVRMMAAIQPWISGALSKTVNLPETATVEDVEEVYFEAWKMGVKALAIYRDNCKVGQPLSAKKKETEKAEVTAKTEATIREAVEKVVEYRPVRKRLPKGRPGITTSFTVGGAEGYMTANSYPDDGLGEVFLKMSKQGSTLAGMMDAFSIAVSVGLQYGVPLETYVSKFTNMRFEPAGMTDDPDVRMAQSIVDYIFRRLALDFLPFETRSALGIHSAEERQRHLETGSYEPSDDVDMDVEGLAQSAPRAQELKAVATPKAEVAAAVPAPKQAHTSAELVEMQLGIQADAPLCFSCGTKMQRAGSCYICEGCGSTSGCS</sequence>
<evidence type="ECO:0000250" key="1"/>
<evidence type="ECO:0000256" key="2">
    <source>
        <dbReference type="SAM" id="MobiDB-lite"/>
    </source>
</evidence>
<evidence type="ECO:0000305" key="3"/>
<protein>
    <recommendedName>
        <fullName>Vitamin B12-dependent ribonucleotide reductase</fullName>
        <ecNumber>1.17.4.1</ecNumber>
    </recommendedName>
    <alternativeName>
        <fullName>Ribonucleoside-diphosphate reductase NrdJ</fullName>
    </alternativeName>
</protein>
<reference key="1">
    <citation type="journal article" date="2001" name="Proc. Natl. Acad. Sci. U.S.A.">
        <title>Genome sequence of an industrial microorganism Streptomyces avermitilis: deducing the ability of producing secondary metabolites.</title>
        <authorList>
            <person name="Omura S."/>
            <person name="Ikeda H."/>
            <person name="Ishikawa J."/>
            <person name="Hanamoto A."/>
            <person name="Takahashi C."/>
            <person name="Shinose M."/>
            <person name="Takahashi Y."/>
            <person name="Horikawa H."/>
            <person name="Nakazawa H."/>
            <person name="Osonoe T."/>
            <person name="Kikuchi H."/>
            <person name="Shiba T."/>
            <person name="Sakaki Y."/>
            <person name="Hattori M."/>
        </authorList>
    </citation>
    <scope>NUCLEOTIDE SEQUENCE [LARGE SCALE GENOMIC DNA]</scope>
    <source>
        <strain>ATCC 31267 / DSM 46492 / JCM 5070 / NBRC 14893 / NCIMB 12804 / NRRL 8165 / MA-4680</strain>
    </source>
</reference>
<reference key="2">
    <citation type="journal article" date="2003" name="Nat. Biotechnol.">
        <title>Complete genome sequence and comparative analysis of the industrial microorganism Streptomyces avermitilis.</title>
        <authorList>
            <person name="Ikeda H."/>
            <person name="Ishikawa J."/>
            <person name="Hanamoto A."/>
            <person name="Shinose M."/>
            <person name="Kikuchi H."/>
            <person name="Shiba T."/>
            <person name="Sakaki Y."/>
            <person name="Hattori M."/>
            <person name="Omura S."/>
        </authorList>
    </citation>
    <scope>NUCLEOTIDE SEQUENCE [LARGE SCALE GENOMIC DNA]</scope>
    <source>
        <strain>ATCC 31267 / DSM 46492 / JCM 5070 / NBRC 14893 / NCIMB 12804 / NRRL 8165 / MA-4680</strain>
    </source>
</reference>
<gene>
    <name type="primary">nrdJ</name>
    <name type="ordered locus">SAV_2461</name>
</gene>
<dbReference type="EC" id="1.17.4.1"/>
<dbReference type="EMBL" id="BA000030">
    <property type="protein sequence ID" value="BAC70172.1"/>
    <property type="molecule type" value="Genomic_DNA"/>
</dbReference>
<dbReference type="RefSeq" id="WP_010983898.1">
    <property type="nucleotide sequence ID" value="NZ_JZJK01000086.1"/>
</dbReference>
<dbReference type="SMR" id="Q82KE2"/>
<dbReference type="GeneID" id="41539548"/>
<dbReference type="KEGG" id="sma:SAVERM_2461"/>
<dbReference type="eggNOG" id="COG0209">
    <property type="taxonomic scope" value="Bacteria"/>
</dbReference>
<dbReference type="HOGENOM" id="CLU_000404_0_1_11"/>
<dbReference type="OrthoDB" id="9762933at2"/>
<dbReference type="Proteomes" id="UP000000428">
    <property type="component" value="Chromosome"/>
</dbReference>
<dbReference type="GO" id="GO:0031419">
    <property type="term" value="F:cobalamin binding"/>
    <property type="evidence" value="ECO:0007669"/>
    <property type="project" value="UniProtKB-KW"/>
</dbReference>
<dbReference type="GO" id="GO:0050897">
    <property type="term" value="F:cobalt ion binding"/>
    <property type="evidence" value="ECO:0007669"/>
    <property type="project" value="InterPro"/>
</dbReference>
<dbReference type="GO" id="GO:0000166">
    <property type="term" value="F:nucleotide binding"/>
    <property type="evidence" value="ECO:0007669"/>
    <property type="project" value="UniProtKB-KW"/>
</dbReference>
<dbReference type="GO" id="GO:0004748">
    <property type="term" value="F:ribonucleoside-diphosphate reductase activity, thioredoxin disulfide as acceptor"/>
    <property type="evidence" value="ECO:0007669"/>
    <property type="project" value="UniProtKB-EC"/>
</dbReference>
<dbReference type="GO" id="GO:0071897">
    <property type="term" value="P:DNA biosynthetic process"/>
    <property type="evidence" value="ECO:0007669"/>
    <property type="project" value="UniProtKB-KW"/>
</dbReference>
<dbReference type="CDD" id="cd02888">
    <property type="entry name" value="RNR_II_dimer"/>
    <property type="match status" value="1"/>
</dbReference>
<dbReference type="FunFam" id="3.20.70.20:FF:000007">
    <property type="entry name" value="Vitamin B12-dependent ribonucleotide reductase"/>
    <property type="match status" value="1"/>
</dbReference>
<dbReference type="Gene3D" id="3.20.70.20">
    <property type="match status" value="1"/>
</dbReference>
<dbReference type="InterPro" id="IPR050862">
    <property type="entry name" value="RdRp_reductase_class-2"/>
</dbReference>
<dbReference type="InterPro" id="IPR013678">
    <property type="entry name" value="RNR_2_N"/>
</dbReference>
<dbReference type="InterPro" id="IPR000788">
    <property type="entry name" value="RNR_lg_C"/>
</dbReference>
<dbReference type="InterPro" id="IPR013344">
    <property type="entry name" value="RNR_NrdJ/NrdZ"/>
</dbReference>
<dbReference type="InterPro" id="IPR024434">
    <property type="entry name" value="TSCPD_dom"/>
</dbReference>
<dbReference type="NCBIfam" id="TIGR02504">
    <property type="entry name" value="NrdJ_Z"/>
    <property type="match status" value="1"/>
</dbReference>
<dbReference type="NCBIfam" id="NF005122">
    <property type="entry name" value="PRK06556.1"/>
    <property type="match status" value="1"/>
</dbReference>
<dbReference type="PANTHER" id="PTHR43371:SF1">
    <property type="entry name" value="RIBONUCLEOSIDE-DIPHOSPHATE REDUCTASE"/>
    <property type="match status" value="1"/>
</dbReference>
<dbReference type="PANTHER" id="PTHR43371">
    <property type="entry name" value="VITAMIN B12-DEPENDENT RIBONUCLEOTIDE REDUCTASE"/>
    <property type="match status" value="1"/>
</dbReference>
<dbReference type="Pfam" id="PF08471">
    <property type="entry name" value="Ribonuc_red_2_N"/>
    <property type="match status" value="1"/>
</dbReference>
<dbReference type="Pfam" id="PF02867">
    <property type="entry name" value="Ribonuc_red_lgC"/>
    <property type="match status" value="1"/>
</dbReference>
<dbReference type="Pfam" id="PF12637">
    <property type="entry name" value="TSCPD"/>
    <property type="match status" value="1"/>
</dbReference>
<dbReference type="PRINTS" id="PR01183">
    <property type="entry name" value="RIBORDTASEM1"/>
</dbReference>
<dbReference type="SUPFAM" id="SSF51998">
    <property type="entry name" value="PFL-like glycyl radical enzymes"/>
    <property type="match status" value="1"/>
</dbReference>
<accession>Q82KE2</accession>
<keyword id="KW-0846">Cobalamin</keyword>
<keyword id="KW-0170">Cobalt</keyword>
<keyword id="KW-1015">Disulfide bond</keyword>
<keyword id="KW-0237">DNA synthesis</keyword>
<keyword id="KW-0547">Nucleotide-binding</keyword>
<keyword id="KW-0560">Oxidoreductase</keyword>
<keyword id="KW-1185">Reference proteome</keyword>
<feature type="chain" id="PRO_0000231661" description="Vitamin B12-dependent ribonucleotide reductase">
    <location>
        <begin position="1"/>
        <end position="964"/>
    </location>
</feature>
<feature type="region of interest" description="Disordered" evidence="2">
    <location>
        <begin position="1"/>
        <end position="21"/>
    </location>
</feature>
<feature type="compositionally biased region" description="Basic residues" evidence="2">
    <location>
        <begin position="12"/>
        <end position="21"/>
    </location>
</feature>
<feature type="active site" description="Proton acceptor" evidence="1">
    <location>
        <position position="363"/>
    </location>
</feature>
<feature type="active site" description="Cysteine radical intermediate" evidence="1">
    <location>
        <position position="365"/>
    </location>
</feature>
<feature type="active site" description="Proton acceptor" evidence="1">
    <location>
        <position position="367"/>
    </location>
</feature>
<feature type="binding site" evidence="1">
    <location>
        <position position="142"/>
    </location>
    <ligand>
        <name>substrate</name>
    </ligand>
</feature>
<feature type="binding site" evidence="1">
    <location>
        <begin position="158"/>
        <end position="159"/>
    </location>
    <ligand>
        <name>substrate</name>
    </ligand>
</feature>
<feature type="binding site" evidence="1">
    <location>
        <position position="187"/>
    </location>
    <ligand>
        <name>substrate</name>
    </ligand>
</feature>
<feature type="binding site" evidence="1">
    <location>
        <begin position="363"/>
        <end position="367"/>
    </location>
    <ligand>
        <name>substrate</name>
    </ligand>
</feature>
<feature type="binding site" evidence="1">
    <location>
        <begin position="553"/>
        <end position="557"/>
    </location>
    <ligand>
        <name>substrate</name>
    </ligand>
</feature>
<feature type="disulfide bond" description="Redox-active" evidence="1">
    <location>
        <begin position="159"/>
        <end position="376"/>
    </location>
</feature>